<sequence>MLVWLAEHLVKYYSGFNVFSYLTFRAIVSLLTALFISLWMGPRMIAHLQKLSFGQVVRNDGPESHFSKRGTPTMGGIMILTAIVISVLLWAYPSNPYVWCVLVVLVGYGVIGFVDDYRKVVRKDTKGLIARWKYFWMSVIALGVAFALYLAGKDTPATQLVVPFFKDVMPQLGLFYILLAYFVIVGTGNAVNLTDGLDGLAIMPTVFVAGGFALVAWATGNMNFASYLHIPYLRHAGELVIVCTAIVGAGLGFLWFNTYPAQVFMGDVGSLALGGALGIIAVLLRQEFLLVIMGGVFVVETLSVILQVGSFKLRGQRIFRMAPIHHHYELKGWPEPRVIVRFWIISLMLVLIGLATLKVR</sequence>
<comment type="function">
    <text evidence="1">Catalyzes the initial step of the lipid cycle reactions in the biosynthesis of the cell wall peptidoglycan: transfers peptidoglycan precursor phospho-MurNAc-pentapeptide from UDP-MurNAc-pentapeptide onto the lipid carrier undecaprenyl phosphate, yielding undecaprenyl-pyrophosphoryl-MurNAc-pentapeptide, known as lipid I.</text>
</comment>
<comment type="catalytic activity">
    <reaction evidence="1">
        <text>UDP-N-acetyl-alpha-D-muramoyl-L-alanyl-gamma-D-glutamyl-meso-2,6-diaminopimeloyl-D-alanyl-D-alanine + di-trans,octa-cis-undecaprenyl phosphate = di-trans,octa-cis-undecaprenyl diphospho-N-acetyl-alpha-D-muramoyl-L-alanyl-D-glutamyl-meso-2,6-diaminopimeloyl-D-alanyl-D-alanine + UMP</text>
        <dbReference type="Rhea" id="RHEA:28386"/>
        <dbReference type="ChEBI" id="CHEBI:57865"/>
        <dbReference type="ChEBI" id="CHEBI:60392"/>
        <dbReference type="ChEBI" id="CHEBI:61386"/>
        <dbReference type="ChEBI" id="CHEBI:61387"/>
        <dbReference type="EC" id="2.7.8.13"/>
    </reaction>
</comment>
<comment type="cofactor">
    <cofactor evidence="1">
        <name>Mg(2+)</name>
        <dbReference type="ChEBI" id="CHEBI:18420"/>
    </cofactor>
</comment>
<comment type="pathway">
    <text evidence="1">Cell wall biogenesis; peptidoglycan biosynthesis.</text>
</comment>
<comment type="subcellular location">
    <subcellularLocation>
        <location evidence="1">Cell inner membrane</location>
        <topology evidence="1">Multi-pass membrane protein</topology>
    </subcellularLocation>
</comment>
<comment type="similarity">
    <text evidence="1">Belongs to the glycosyltransferase 4 family. MraY subfamily.</text>
</comment>
<feature type="chain" id="PRO_1000003065" description="Phospho-N-acetylmuramoyl-pentapeptide-transferase">
    <location>
        <begin position="1"/>
        <end position="360"/>
    </location>
</feature>
<feature type="topological domain" description="Periplasmic" evidence="1">
    <location>
        <begin position="1"/>
        <end position="25"/>
    </location>
</feature>
<feature type="transmembrane region" description="Helical" evidence="1">
    <location>
        <begin position="26"/>
        <end position="46"/>
    </location>
</feature>
<feature type="topological domain" description="Cytoplasmic" evidence="1">
    <location>
        <begin position="47"/>
        <end position="71"/>
    </location>
</feature>
<feature type="transmembrane region" description="Helical" evidence="1">
    <location>
        <begin position="72"/>
        <end position="92"/>
    </location>
</feature>
<feature type="topological domain" description="Periplasmic" evidence="1">
    <location>
        <position position="93"/>
    </location>
</feature>
<feature type="transmembrane region" description="Helical" evidence="1">
    <location>
        <begin position="94"/>
        <end position="114"/>
    </location>
</feature>
<feature type="topological domain" description="Cytoplasmic" evidence="1">
    <location>
        <begin position="115"/>
        <end position="131"/>
    </location>
</feature>
<feature type="transmembrane region" description="Helical" evidence="1">
    <location>
        <begin position="132"/>
        <end position="152"/>
    </location>
</feature>
<feature type="topological domain" description="Periplasmic" evidence="1">
    <location>
        <begin position="153"/>
        <end position="167"/>
    </location>
</feature>
<feature type="transmembrane region" description="Helical" evidence="1">
    <location>
        <begin position="168"/>
        <end position="188"/>
    </location>
</feature>
<feature type="topological domain" description="Cytoplasmic" evidence="1">
    <location>
        <begin position="189"/>
        <end position="198"/>
    </location>
</feature>
<feature type="transmembrane region" description="Helical" evidence="1">
    <location>
        <begin position="199"/>
        <end position="219"/>
    </location>
</feature>
<feature type="topological domain" description="Periplasmic" evidence="1">
    <location>
        <begin position="220"/>
        <end position="235"/>
    </location>
</feature>
<feature type="transmembrane region" description="Helical" evidence="1">
    <location>
        <begin position="236"/>
        <end position="256"/>
    </location>
</feature>
<feature type="topological domain" description="Cytoplasmic" evidence="1">
    <location>
        <begin position="257"/>
        <end position="262"/>
    </location>
</feature>
<feature type="transmembrane region" description="Helical" evidence="1">
    <location>
        <begin position="263"/>
        <end position="283"/>
    </location>
</feature>
<feature type="topological domain" description="Periplasmic" evidence="1">
    <location>
        <begin position="284"/>
        <end position="287"/>
    </location>
</feature>
<feature type="transmembrane region" description="Helical" evidence="1">
    <location>
        <begin position="288"/>
        <end position="308"/>
    </location>
</feature>
<feature type="topological domain" description="Cytoplasmic" evidence="1">
    <location>
        <begin position="309"/>
        <end position="337"/>
    </location>
</feature>
<feature type="transmembrane region" description="Helical" evidence="1">
    <location>
        <begin position="338"/>
        <end position="358"/>
    </location>
</feature>
<feature type="topological domain" description="Periplasmic" evidence="1">
    <location>
        <begin position="359"/>
        <end position="360"/>
    </location>
</feature>
<name>MRAY_SHIF8</name>
<keyword id="KW-0131">Cell cycle</keyword>
<keyword id="KW-0132">Cell division</keyword>
<keyword id="KW-0997">Cell inner membrane</keyword>
<keyword id="KW-1003">Cell membrane</keyword>
<keyword id="KW-0133">Cell shape</keyword>
<keyword id="KW-0961">Cell wall biogenesis/degradation</keyword>
<keyword id="KW-0460">Magnesium</keyword>
<keyword id="KW-0472">Membrane</keyword>
<keyword id="KW-0479">Metal-binding</keyword>
<keyword id="KW-0573">Peptidoglycan synthesis</keyword>
<keyword id="KW-0808">Transferase</keyword>
<keyword id="KW-0812">Transmembrane</keyword>
<keyword id="KW-1133">Transmembrane helix</keyword>
<protein>
    <recommendedName>
        <fullName evidence="1">Phospho-N-acetylmuramoyl-pentapeptide-transferase</fullName>
        <ecNumber evidence="1">2.7.8.13</ecNumber>
    </recommendedName>
    <alternativeName>
        <fullName evidence="1">UDP-MurNAc-pentapeptide phosphotransferase</fullName>
    </alternativeName>
</protein>
<accession>Q0T8B0</accession>
<dbReference type="EC" id="2.7.8.13" evidence="1"/>
<dbReference type="EMBL" id="CP000266">
    <property type="protein sequence ID" value="ABF02366.1"/>
    <property type="molecule type" value="Genomic_DNA"/>
</dbReference>
<dbReference type="RefSeq" id="WP_000964131.1">
    <property type="nucleotide sequence ID" value="NC_008258.1"/>
</dbReference>
<dbReference type="SMR" id="Q0T8B0"/>
<dbReference type="GeneID" id="93777347"/>
<dbReference type="KEGG" id="sfv:SFV_0080"/>
<dbReference type="HOGENOM" id="CLU_023982_0_0_6"/>
<dbReference type="UniPathway" id="UPA00219"/>
<dbReference type="Proteomes" id="UP000000659">
    <property type="component" value="Chromosome"/>
</dbReference>
<dbReference type="GO" id="GO:0005886">
    <property type="term" value="C:plasma membrane"/>
    <property type="evidence" value="ECO:0007669"/>
    <property type="project" value="UniProtKB-SubCell"/>
</dbReference>
<dbReference type="GO" id="GO:0046872">
    <property type="term" value="F:metal ion binding"/>
    <property type="evidence" value="ECO:0007669"/>
    <property type="project" value="UniProtKB-KW"/>
</dbReference>
<dbReference type="GO" id="GO:0008963">
    <property type="term" value="F:phospho-N-acetylmuramoyl-pentapeptide-transferase activity"/>
    <property type="evidence" value="ECO:0007669"/>
    <property type="project" value="UniProtKB-UniRule"/>
</dbReference>
<dbReference type="GO" id="GO:0051992">
    <property type="term" value="F:UDP-N-acetylmuramoyl-L-alanyl-D-glutamyl-meso-2,6-diaminopimelyl-D-alanyl-D-alanine:undecaprenyl-phosphate transferase activity"/>
    <property type="evidence" value="ECO:0007669"/>
    <property type="project" value="RHEA"/>
</dbReference>
<dbReference type="GO" id="GO:0051301">
    <property type="term" value="P:cell division"/>
    <property type="evidence" value="ECO:0007669"/>
    <property type="project" value="UniProtKB-KW"/>
</dbReference>
<dbReference type="GO" id="GO:0071555">
    <property type="term" value="P:cell wall organization"/>
    <property type="evidence" value="ECO:0007669"/>
    <property type="project" value="UniProtKB-KW"/>
</dbReference>
<dbReference type="GO" id="GO:0009252">
    <property type="term" value="P:peptidoglycan biosynthetic process"/>
    <property type="evidence" value="ECO:0007669"/>
    <property type="project" value="UniProtKB-UniRule"/>
</dbReference>
<dbReference type="GO" id="GO:0008360">
    <property type="term" value="P:regulation of cell shape"/>
    <property type="evidence" value="ECO:0007669"/>
    <property type="project" value="UniProtKB-KW"/>
</dbReference>
<dbReference type="CDD" id="cd06852">
    <property type="entry name" value="GT_MraY"/>
    <property type="match status" value="1"/>
</dbReference>
<dbReference type="HAMAP" id="MF_00038">
    <property type="entry name" value="MraY"/>
    <property type="match status" value="1"/>
</dbReference>
<dbReference type="InterPro" id="IPR000715">
    <property type="entry name" value="Glycosyl_transferase_4"/>
</dbReference>
<dbReference type="InterPro" id="IPR003524">
    <property type="entry name" value="PNAcMuramoyl-5peptid_Trfase"/>
</dbReference>
<dbReference type="InterPro" id="IPR018480">
    <property type="entry name" value="PNAcMuramoyl-5peptid_Trfase_CS"/>
</dbReference>
<dbReference type="NCBIfam" id="TIGR00445">
    <property type="entry name" value="mraY"/>
    <property type="match status" value="1"/>
</dbReference>
<dbReference type="PANTHER" id="PTHR22926">
    <property type="entry name" value="PHOSPHO-N-ACETYLMURAMOYL-PENTAPEPTIDE-TRANSFERASE"/>
    <property type="match status" value="1"/>
</dbReference>
<dbReference type="PANTHER" id="PTHR22926:SF5">
    <property type="entry name" value="PHOSPHO-N-ACETYLMURAMOYL-PENTAPEPTIDE-TRANSFERASE HOMOLOG"/>
    <property type="match status" value="1"/>
</dbReference>
<dbReference type="Pfam" id="PF00953">
    <property type="entry name" value="Glycos_transf_4"/>
    <property type="match status" value="1"/>
</dbReference>
<dbReference type="Pfam" id="PF10555">
    <property type="entry name" value="MraY_sig1"/>
    <property type="match status" value="1"/>
</dbReference>
<dbReference type="PROSITE" id="PS01347">
    <property type="entry name" value="MRAY_1"/>
    <property type="match status" value="1"/>
</dbReference>
<dbReference type="PROSITE" id="PS01348">
    <property type="entry name" value="MRAY_2"/>
    <property type="match status" value="1"/>
</dbReference>
<gene>
    <name evidence="1" type="primary">mraY</name>
    <name type="ordered locus">SFV_0080</name>
</gene>
<reference key="1">
    <citation type="journal article" date="2006" name="BMC Genomics">
        <title>Complete genome sequence of Shigella flexneri 5b and comparison with Shigella flexneri 2a.</title>
        <authorList>
            <person name="Nie H."/>
            <person name="Yang F."/>
            <person name="Zhang X."/>
            <person name="Yang J."/>
            <person name="Chen L."/>
            <person name="Wang J."/>
            <person name="Xiong Z."/>
            <person name="Peng J."/>
            <person name="Sun L."/>
            <person name="Dong J."/>
            <person name="Xue Y."/>
            <person name="Xu X."/>
            <person name="Chen S."/>
            <person name="Yao Z."/>
            <person name="Shen Y."/>
            <person name="Jin Q."/>
        </authorList>
    </citation>
    <scope>NUCLEOTIDE SEQUENCE [LARGE SCALE GENOMIC DNA]</scope>
    <source>
        <strain>8401</strain>
    </source>
</reference>
<organism>
    <name type="scientific">Shigella flexneri serotype 5b (strain 8401)</name>
    <dbReference type="NCBI Taxonomy" id="373384"/>
    <lineage>
        <taxon>Bacteria</taxon>
        <taxon>Pseudomonadati</taxon>
        <taxon>Pseudomonadota</taxon>
        <taxon>Gammaproteobacteria</taxon>
        <taxon>Enterobacterales</taxon>
        <taxon>Enterobacteriaceae</taxon>
        <taxon>Shigella</taxon>
    </lineage>
</organism>
<evidence type="ECO:0000255" key="1">
    <source>
        <dbReference type="HAMAP-Rule" id="MF_00038"/>
    </source>
</evidence>
<proteinExistence type="inferred from homology"/>